<gene>
    <name evidence="1" type="primary">ccmE</name>
    <name evidence="1" type="synonym">cycJ</name>
    <name type="ordered locus">c2734</name>
</gene>
<reference key="1">
    <citation type="journal article" date="2002" name="Proc. Natl. Acad. Sci. U.S.A.">
        <title>Extensive mosaic structure revealed by the complete genome sequence of uropathogenic Escherichia coli.</title>
        <authorList>
            <person name="Welch R.A."/>
            <person name="Burland V."/>
            <person name="Plunkett G. III"/>
            <person name="Redford P."/>
            <person name="Roesch P."/>
            <person name="Rasko D."/>
            <person name="Buckles E.L."/>
            <person name="Liou S.-R."/>
            <person name="Boutin A."/>
            <person name="Hackett J."/>
            <person name="Stroud D."/>
            <person name="Mayhew G.F."/>
            <person name="Rose D.J."/>
            <person name="Zhou S."/>
            <person name="Schwartz D.C."/>
            <person name="Perna N.T."/>
            <person name="Mobley H.L.T."/>
            <person name="Donnenberg M.S."/>
            <person name="Blattner F.R."/>
        </authorList>
    </citation>
    <scope>NUCLEOTIDE SEQUENCE [LARGE SCALE GENOMIC DNA]</scope>
    <source>
        <strain>CFT073 / ATCC 700928 / UPEC</strain>
    </source>
</reference>
<accession>P69491</accession>
<accession>P33928</accession>
<protein>
    <recommendedName>
        <fullName evidence="1">Cytochrome c-type biogenesis protein CcmE</fullName>
    </recommendedName>
    <alternativeName>
        <fullName evidence="1">Cytochrome c maturation protein E</fullName>
    </alternativeName>
    <alternativeName>
        <fullName evidence="1">Heme chaperone CcmE</fullName>
    </alternativeName>
</protein>
<organism>
    <name type="scientific">Escherichia coli O6:H1 (strain CFT073 / ATCC 700928 / UPEC)</name>
    <dbReference type="NCBI Taxonomy" id="199310"/>
    <lineage>
        <taxon>Bacteria</taxon>
        <taxon>Pseudomonadati</taxon>
        <taxon>Pseudomonadota</taxon>
        <taxon>Gammaproteobacteria</taxon>
        <taxon>Enterobacterales</taxon>
        <taxon>Enterobacteriaceae</taxon>
        <taxon>Escherichia</taxon>
    </lineage>
</organism>
<comment type="function">
    <text evidence="1">Heme chaperone required for the biogenesis of c-type cytochromes. Transiently binds heme delivered by CcmC and transfers the heme to apo-cytochromes in a process facilitated by CcmF and CcmH.</text>
</comment>
<comment type="subcellular location">
    <subcellularLocation>
        <location evidence="1">Cell inner membrane</location>
        <topology evidence="1">Single-pass type II membrane protein</topology>
        <orientation evidence="1">Periplasmic side</orientation>
    </subcellularLocation>
</comment>
<comment type="similarity">
    <text evidence="1">Belongs to the CcmE/CycJ family.</text>
</comment>
<sequence>MNIRRKNRLWIACAVLAGLALTIGLVLYALRSNIDLFYTPGEILYGKRETQQMPEVGQRLRVGGMVMPGSVQRDPNSLKVTFTIYDAEGSVDVSYEGILPDLFREGQGVVVQGELEKGNHILAKEVLAKHDENYTPPEVEKAMEANHRRPASVYKDPAS</sequence>
<name>CCME_ECOL6</name>
<dbReference type="EMBL" id="AE014075">
    <property type="protein sequence ID" value="AAN81188.1"/>
    <property type="molecule type" value="Genomic_DNA"/>
</dbReference>
<dbReference type="RefSeq" id="WP_001026418.1">
    <property type="nucleotide sequence ID" value="NZ_CP051263.1"/>
</dbReference>
<dbReference type="SMR" id="P69491"/>
<dbReference type="STRING" id="199310.c2734"/>
<dbReference type="GeneID" id="86860369"/>
<dbReference type="KEGG" id="ecc:c2734"/>
<dbReference type="eggNOG" id="COG2332">
    <property type="taxonomic scope" value="Bacteria"/>
</dbReference>
<dbReference type="HOGENOM" id="CLU_079503_1_0_6"/>
<dbReference type="BioCyc" id="ECOL199310:C2734-MONOMER"/>
<dbReference type="Proteomes" id="UP000001410">
    <property type="component" value="Chromosome"/>
</dbReference>
<dbReference type="GO" id="GO:0005886">
    <property type="term" value="C:plasma membrane"/>
    <property type="evidence" value="ECO:0007669"/>
    <property type="project" value="UniProtKB-SubCell"/>
</dbReference>
<dbReference type="GO" id="GO:0020037">
    <property type="term" value="F:heme binding"/>
    <property type="evidence" value="ECO:0007669"/>
    <property type="project" value="InterPro"/>
</dbReference>
<dbReference type="GO" id="GO:0046872">
    <property type="term" value="F:metal ion binding"/>
    <property type="evidence" value="ECO:0007669"/>
    <property type="project" value="UniProtKB-KW"/>
</dbReference>
<dbReference type="GO" id="GO:0017004">
    <property type="term" value="P:cytochrome complex assembly"/>
    <property type="evidence" value="ECO:0007669"/>
    <property type="project" value="UniProtKB-KW"/>
</dbReference>
<dbReference type="FunFam" id="2.40.50.140:FF:000104">
    <property type="entry name" value="Cytochrome c-type biogenesis protein CcmE"/>
    <property type="match status" value="1"/>
</dbReference>
<dbReference type="Gene3D" id="2.40.50.140">
    <property type="entry name" value="Nucleic acid-binding proteins"/>
    <property type="match status" value="1"/>
</dbReference>
<dbReference type="HAMAP" id="MF_01959">
    <property type="entry name" value="CcmE"/>
    <property type="match status" value="1"/>
</dbReference>
<dbReference type="InterPro" id="IPR004329">
    <property type="entry name" value="CcmE"/>
</dbReference>
<dbReference type="InterPro" id="IPR036127">
    <property type="entry name" value="CcmE-like_sf"/>
</dbReference>
<dbReference type="InterPro" id="IPR012340">
    <property type="entry name" value="NA-bd_OB-fold"/>
</dbReference>
<dbReference type="NCBIfam" id="NF009635">
    <property type="entry name" value="PRK13150.1"/>
    <property type="match status" value="1"/>
</dbReference>
<dbReference type="NCBIfam" id="NF009638">
    <property type="entry name" value="PRK13165.1"/>
    <property type="match status" value="1"/>
</dbReference>
<dbReference type="NCBIfam" id="NF009727">
    <property type="entry name" value="PRK13254.1-1"/>
    <property type="match status" value="1"/>
</dbReference>
<dbReference type="NCBIfam" id="NF009729">
    <property type="entry name" value="PRK13254.1-3"/>
    <property type="match status" value="1"/>
</dbReference>
<dbReference type="PANTHER" id="PTHR34128">
    <property type="entry name" value="CYTOCHROME C-TYPE BIOGENESIS PROTEIN CCME HOMOLOG, MITOCHONDRIAL"/>
    <property type="match status" value="1"/>
</dbReference>
<dbReference type="PANTHER" id="PTHR34128:SF2">
    <property type="entry name" value="CYTOCHROME C-TYPE BIOGENESIS PROTEIN CCME HOMOLOG, MITOCHONDRIAL"/>
    <property type="match status" value="1"/>
</dbReference>
<dbReference type="Pfam" id="PF03100">
    <property type="entry name" value="CcmE"/>
    <property type="match status" value="1"/>
</dbReference>
<dbReference type="SUPFAM" id="SSF82093">
    <property type="entry name" value="Heme chaperone CcmE"/>
    <property type="match status" value="1"/>
</dbReference>
<feature type="chain" id="PRO_0000201576" description="Cytochrome c-type biogenesis protein CcmE">
    <location>
        <begin position="1"/>
        <end position="159"/>
    </location>
</feature>
<feature type="topological domain" description="Cytoplasmic" evidence="1">
    <location>
        <begin position="1"/>
        <end position="8"/>
    </location>
</feature>
<feature type="transmembrane region" description="Helical; Signal-anchor for type II membrane protein" evidence="1">
    <location>
        <begin position="9"/>
        <end position="29"/>
    </location>
</feature>
<feature type="topological domain" description="Periplasmic" evidence="1">
    <location>
        <begin position="30"/>
        <end position="159"/>
    </location>
</feature>
<feature type="region of interest" description="Disordered" evidence="2">
    <location>
        <begin position="132"/>
        <end position="159"/>
    </location>
</feature>
<feature type="compositionally biased region" description="Basic and acidic residues" evidence="2">
    <location>
        <begin position="132"/>
        <end position="147"/>
    </location>
</feature>
<feature type="binding site" description="covalent" evidence="1">
    <location>
        <position position="130"/>
    </location>
    <ligand>
        <name>heme</name>
        <dbReference type="ChEBI" id="CHEBI:30413"/>
    </ligand>
</feature>
<feature type="binding site" description="axial binding residue" evidence="1">
    <location>
        <position position="134"/>
    </location>
    <ligand>
        <name>heme</name>
        <dbReference type="ChEBI" id="CHEBI:30413"/>
    </ligand>
    <ligandPart>
        <name>Fe</name>
        <dbReference type="ChEBI" id="CHEBI:18248"/>
    </ligandPart>
</feature>
<evidence type="ECO:0000255" key="1">
    <source>
        <dbReference type="HAMAP-Rule" id="MF_01959"/>
    </source>
</evidence>
<evidence type="ECO:0000256" key="2">
    <source>
        <dbReference type="SAM" id="MobiDB-lite"/>
    </source>
</evidence>
<keyword id="KW-0997">Cell inner membrane</keyword>
<keyword id="KW-1003">Cell membrane</keyword>
<keyword id="KW-0201">Cytochrome c-type biogenesis</keyword>
<keyword id="KW-0349">Heme</keyword>
<keyword id="KW-0408">Iron</keyword>
<keyword id="KW-0472">Membrane</keyword>
<keyword id="KW-0479">Metal-binding</keyword>
<keyword id="KW-1185">Reference proteome</keyword>
<keyword id="KW-0735">Signal-anchor</keyword>
<keyword id="KW-0812">Transmembrane</keyword>
<keyword id="KW-1133">Transmembrane helix</keyword>
<proteinExistence type="inferred from homology"/>